<feature type="chain" id="PRO_0000079742" description="Protein FAM223A">
    <location>
        <begin position="1"/>
        <end position="122"/>
    </location>
</feature>
<proteinExistence type="evidence at transcript level"/>
<organism>
    <name type="scientific">Homo sapiens</name>
    <name type="common">Human</name>
    <dbReference type="NCBI Taxonomy" id="9606"/>
    <lineage>
        <taxon>Eukaryota</taxon>
        <taxon>Metazoa</taxon>
        <taxon>Chordata</taxon>
        <taxon>Craniata</taxon>
        <taxon>Vertebrata</taxon>
        <taxon>Euteleostomi</taxon>
        <taxon>Mammalia</taxon>
        <taxon>Eutheria</taxon>
        <taxon>Euarchontoglires</taxon>
        <taxon>Primates</taxon>
        <taxon>Haplorrhini</taxon>
        <taxon>Catarrhini</taxon>
        <taxon>Hominidae</taxon>
        <taxon>Homo</taxon>
    </lineage>
</organism>
<name>F223A_HUMAN</name>
<evidence type="ECO:0000305" key="1"/>
<sequence length="122" mass="13808">MYVQEHRLWGLMDKPHSAPCLMSLSLSFLICNKGRNAIRVQQSTDERMDAMLLWQCPTQGTRKNHESNSSLHHVPNWIFHSTIIPPNKGSKRCLRKVDWLLPRAGGVGGKRGVTADGDRVSF</sequence>
<protein>
    <recommendedName>
        <fullName>Protein FAM223A</fullName>
    </recommendedName>
    <alternativeName>
        <fullName>SPCX</fullName>
    </alternativeName>
</protein>
<keyword id="KW-1185">Reference proteome</keyword>
<dbReference type="EMBL" id="AY168775">
    <property type="protein sequence ID" value="AAO11658.1"/>
    <property type="molecule type" value="mRNA"/>
</dbReference>
<dbReference type="EMBL" id="AF277315">
    <property type="status" value="NOT_ANNOTATED_CDS"/>
    <property type="molecule type" value="Genomic_DNA"/>
</dbReference>
<dbReference type="IntAct" id="Q8IWN6">
    <property type="interactions" value="1"/>
</dbReference>
<dbReference type="BioMuta" id="HGNC:30612"/>
<dbReference type="MassIVE" id="Q8IWN6"/>
<dbReference type="ProteomicsDB" id="70873"/>
<dbReference type="AGR" id="HGNC:30612"/>
<dbReference type="GeneCards" id="FAM223A"/>
<dbReference type="HGNC" id="HGNC:30612">
    <property type="gene designation" value="FAM223A"/>
</dbReference>
<dbReference type="neXtProt" id="NX_Q8IWN6"/>
<dbReference type="InParanoid" id="Q8IWN6"/>
<dbReference type="PAN-GO" id="Q8IWN6">
    <property type="GO annotations" value="0 GO annotations based on evolutionary models"/>
</dbReference>
<dbReference type="PhylomeDB" id="Q8IWN6"/>
<dbReference type="Pharos" id="Q8IWN6">
    <property type="development level" value="Tdark"/>
</dbReference>
<dbReference type="PRO" id="PR:Q8IWN6"/>
<dbReference type="Proteomes" id="UP000005640">
    <property type="component" value="Unplaced"/>
</dbReference>
<dbReference type="RNAct" id="Q8IWN6">
    <property type="molecule type" value="protein"/>
</dbReference>
<gene>
    <name type="primary">FAM223A</name>
    <name type="synonym">CXorf52</name>
    <name type="synonym">LINC00204A</name>
    <name type="synonym">NCRNA00204</name>
</gene>
<comment type="similarity">
    <text evidence="1">Belongs to the FAM223 family.</text>
</comment>
<accession>Q8IWN6</accession>
<reference key="1">
    <citation type="submission" date="2002-10" db="EMBL/GenBank/DDBJ databases">
        <authorList>
            <person name="Guo J.H."/>
            <person name="Chen L."/>
        </authorList>
    </citation>
    <scope>NUCLEOTIDE SEQUENCE [LARGE SCALE MRNA]</scope>
    <source>
        <tissue>Lung</tissue>
    </source>
</reference>
<reference key="2">
    <citation type="journal article" date="2005" name="Nature">
        <title>The DNA sequence of the human X chromosome.</title>
        <authorList>
            <person name="Ross M.T."/>
            <person name="Grafham D.V."/>
            <person name="Coffey A.J."/>
            <person name="Scherer S."/>
            <person name="McLay K."/>
            <person name="Muzny D."/>
            <person name="Platzer M."/>
            <person name="Howell G.R."/>
            <person name="Burrows C."/>
            <person name="Bird C.P."/>
            <person name="Frankish A."/>
            <person name="Lovell F.L."/>
            <person name="Howe K.L."/>
            <person name="Ashurst J.L."/>
            <person name="Fulton R.S."/>
            <person name="Sudbrak R."/>
            <person name="Wen G."/>
            <person name="Jones M.C."/>
            <person name="Hurles M.E."/>
            <person name="Andrews T.D."/>
            <person name="Scott C.E."/>
            <person name="Searle S."/>
            <person name="Ramser J."/>
            <person name="Whittaker A."/>
            <person name="Deadman R."/>
            <person name="Carter N.P."/>
            <person name="Hunt S.E."/>
            <person name="Chen R."/>
            <person name="Cree A."/>
            <person name="Gunaratne P."/>
            <person name="Havlak P."/>
            <person name="Hodgson A."/>
            <person name="Metzker M.L."/>
            <person name="Richards S."/>
            <person name="Scott G."/>
            <person name="Steffen D."/>
            <person name="Sodergren E."/>
            <person name="Wheeler D.A."/>
            <person name="Worley K.C."/>
            <person name="Ainscough R."/>
            <person name="Ambrose K.D."/>
            <person name="Ansari-Lari M.A."/>
            <person name="Aradhya S."/>
            <person name="Ashwell R.I."/>
            <person name="Babbage A.K."/>
            <person name="Bagguley C.L."/>
            <person name="Ballabio A."/>
            <person name="Banerjee R."/>
            <person name="Barker G.E."/>
            <person name="Barlow K.F."/>
            <person name="Barrett I.P."/>
            <person name="Bates K.N."/>
            <person name="Beare D.M."/>
            <person name="Beasley H."/>
            <person name="Beasley O."/>
            <person name="Beck A."/>
            <person name="Bethel G."/>
            <person name="Blechschmidt K."/>
            <person name="Brady N."/>
            <person name="Bray-Allen S."/>
            <person name="Bridgeman A.M."/>
            <person name="Brown A.J."/>
            <person name="Brown M.J."/>
            <person name="Bonnin D."/>
            <person name="Bruford E.A."/>
            <person name="Buhay C."/>
            <person name="Burch P."/>
            <person name="Burford D."/>
            <person name="Burgess J."/>
            <person name="Burrill W."/>
            <person name="Burton J."/>
            <person name="Bye J.M."/>
            <person name="Carder C."/>
            <person name="Carrel L."/>
            <person name="Chako J."/>
            <person name="Chapman J.C."/>
            <person name="Chavez D."/>
            <person name="Chen E."/>
            <person name="Chen G."/>
            <person name="Chen Y."/>
            <person name="Chen Z."/>
            <person name="Chinault C."/>
            <person name="Ciccodicola A."/>
            <person name="Clark S.Y."/>
            <person name="Clarke G."/>
            <person name="Clee C.M."/>
            <person name="Clegg S."/>
            <person name="Clerc-Blankenburg K."/>
            <person name="Clifford K."/>
            <person name="Cobley V."/>
            <person name="Cole C.G."/>
            <person name="Conquer J.S."/>
            <person name="Corby N."/>
            <person name="Connor R.E."/>
            <person name="David R."/>
            <person name="Davies J."/>
            <person name="Davis C."/>
            <person name="Davis J."/>
            <person name="Delgado O."/>
            <person name="Deshazo D."/>
            <person name="Dhami P."/>
            <person name="Ding Y."/>
            <person name="Dinh H."/>
            <person name="Dodsworth S."/>
            <person name="Draper H."/>
            <person name="Dugan-Rocha S."/>
            <person name="Dunham A."/>
            <person name="Dunn M."/>
            <person name="Durbin K.J."/>
            <person name="Dutta I."/>
            <person name="Eades T."/>
            <person name="Ellwood M."/>
            <person name="Emery-Cohen A."/>
            <person name="Errington H."/>
            <person name="Evans K.L."/>
            <person name="Faulkner L."/>
            <person name="Francis F."/>
            <person name="Frankland J."/>
            <person name="Fraser A.E."/>
            <person name="Galgoczy P."/>
            <person name="Gilbert J."/>
            <person name="Gill R."/>
            <person name="Gloeckner G."/>
            <person name="Gregory S.G."/>
            <person name="Gribble S."/>
            <person name="Griffiths C."/>
            <person name="Grocock R."/>
            <person name="Gu Y."/>
            <person name="Gwilliam R."/>
            <person name="Hamilton C."/>
            <person name="Hart E.A."/>
            <person name="Hawes A."/>
            <person name="Heath P.D."/>
            <person name="Heitmann K."/>
            <person name="Hennig S."/>
            <person name="Hernandez J."/>
            <person name="Hinzmann B."/>
            <person name="Ho S."/>
            <person name="Hoffs M."/>
            <person name="Howden P.J."/>
            <person name="Huckle E.J."/>
            <person name="Hume J."/>
            <person name="Hunt P.J."/>
            <person name="Hunt A.R."/>
            <person name="Isherwood J."/>
            <person name="Jacob L."/>
            <person name="Johnson D."/>
            <person name="Jones S."/>
            <person name="de Jong P.J."/>
            <person name="Joseph S.S."/>
            <person name="Keenan S."/>
            <person name="Kelly S."/>
            <person name="Kershaw J.K."/>
            <person name="Khan Z."/>
            <person name="Kioschis P."/>
            <person name="Klages S."/>
            <person name="Knights A.J."/>
            <person name="Kosiura A."/>
            <person name="Kovar-Smith C."/>
            <person name="Laird G.K."/>
            <person name="Langford C."/>
            <person name="Lawlor S."/>
            <person name="Leversha M."/>
            <person name="Lewis L."/>
            <person name="Liu W."/>
            <person name="Lloyd C."/>
            <person name="Lloyd D.M."/>
            <person name="Loulseged H."/>
            <person name="Loveland J.E."/>
            <person name="Lovell J.D."/>
            <person name="Lozado R."/>
            <person name="Lu J."/>
            <person name="Lyne R."/>
            <person name="Ma J."/>
            <person name="Maheshwari M."/>
            <person name="Matthews L.H."/>
            <person name="McDowall J."/>
            <person name="McLaren S."/>
            <person name="McMurray A."/>
            <person name="Meidl P."/>
            <person name="Meitinger T."/>
            <person name="Milne S."/>
            <person name="Miner G."/>
            <person name="Mistry S.L."/>
            <person name="Morgan M."/>
            <person name="Morris S."/>
            <person name="Mueller I."/>
            <person name="Mullikin J.C."/>
            <person name="Nguyen N."/>
            <person name="Nordsiek G."/>
            <person name="Nyakatura G."/>
            <person name="O'dell C.N."/>
            <person name="Okwuonu G."/>
            <person name="Palmer S."/>
            <person name="Pandian R."/>
            <person name="Parker D."/>
            <person name="Parrish J."/>
            <person name="Pasternak S."/>
            <person name="Patel D."/>
            <person name="Pearce A.V."/>
            <person name="Pearson D.M."/>
            <person name="Pelan S.E."/>
            <person name="Perez L."/>
            <person name="Porter K.M."/>
            <person name="Ramsey Y."/>
            <person name="Reichwald K."/>
            <person name="Rhodes S."/>
            <person name="Ridler K.A."/>
            <person name="Schlessinger D."/>
            <person name="Schueler M.G."/>
            <person name="Sehra H.K."/>
            <person name="Shaw-Smith C."/>
            <person name="Shen H."/>
            <person name="Sheridan E.M."/>
            <person name="Shownkeen R."/>
            <person name="Skuce C.D."/>
            <person name="Smith M.L."/>
            <person name="Sotheran E.C."/>
            <person name="Steingruber H.E."/>
            <person name="Steward C.A."/>
            <person name="Storey R."/>
            <person name="Swann R.M."/>
            <person name="Swarbreck D."/>
            <person name="Tabor P.E."/>
            <person name="Taudien S."/>
            <person name="Taylor T."/>
            <person name="Teague B."/>
            <person name="Thomas K."/>
            <person name="Thorpe A."/>
            <person name="Timms K."/>
            <person name="Tracey A."/>
            <person name="Trevanion S."/>
            <person name="Tromans A.C."/>
            <person name="d'Urso M."/>
            <person name="Verduzco D."/>
            <person name="Villasana D."/>
            <person name="Waldron L."/>
            <person name="Wall M."/>
            <person name="Wang Q."/>
            <person name="Warren J."/>
            <person name="Warry G.L."/>
            <person name="Wei X."/>
            <person name="West A."/>
            <person name="Whitehead S.L."/>
            <person name="Whiteley M.N."/>
            <person name="Wilkinson J.E."/>
            <person name="Willey D.L."/>
            <person name="Williams G."/>
            <person name="Williams L."/>
            <person name="Williamson A."/>
            <person name="Williamson H."/>
            <person name="Wilming L."/>
            <person name="Woodmansey R.L."/>
            <person name="Wray P.W."/>
            <person name="Yen J."/>
            <person name="Zhang J."/>
            <person name="Zhou J."/>
            <person name="Zoghbi H."/>
            <person name="Zorilla S."/>
            <person name="Buck D."/>
            <person name="Reinhardt R."/>
            <person name="Poustka A."/>
            <person name="Rosenthal A."/>
            <person name="Lehrach H."/>
            <person name="Meindl A."/>
            <person name="Minx P.J."/>
            <person name="Hillier L.W."/>
            <person name="Willard H.F."/>
            <person name="Wilson R.K."/>
            <person name="Waterston R.H."/>
            <person name="Rice C.M."/>
            <person name="Vaudin M."/>
            <person name="Coulson A."/>
            <person name="Nelson D.L."/>
            <person name="Weinstock G."/>
            <person name="Sulston J.E."/>
            <person name="Durbin R.M."/>
            <person name="Hubbard T."/>
            <person name="Gibbs R.A."/>
            <person name="Beck S."/>
            <person name="Rogers J."/>
            <person name="Bentley D.R."/>
        </authorList>
    </citation>
    <scope>NUCLEOTIDE SEQUENCE [LARGE SCALE GENOMIC DNA]</scope>
</reference>